<gene>
    <name evidence="2" type="primary">CCT5</name>
    <name evidence="4" type="ordered locus">At1g24510</name>
    <name type="ORF">F21J9.12</name>
</gene>
<accession>O04450</accession>
<accession>F4IAR7</accession>
<organism>
    <name type="scientific">Arabidopsis thaliana</name>
    <name type="common">Mouse-ear cress</name>
    <dbReference type="NCBI Taxonomy" id="3702"/>
    <lineage>
        <taxon>Eukaryota</taxon>
        <taxon>Viridiplantae</taxon>
        <taxon>Streptophyta</taxon>
        <taxon>Embryophyta</taxon>
        <taxon>Tracheophyta</taxon>
        <taxon>Spermatophyta</taxon>
        <taxon>Magnoliopsida</taxon>
        <taxon>eudicotyledons</taxon>
        <taxon>Gunneridae</taxon>
        <taxon>Pentapetalae</taxon>
        <taxon>rosids</taxon>
        <taxon>malvids</taxon>
        <taxon>Brassicales</taxon>
        <taxon>Brassicaceae</taxon>
        <taxon>Camelineae</taxon>
        <taxon>Arabidopsis</taxon>
    </lineage>
</organism>
<proteinExistence type="evidence at protein level"/>
<reference key="1">
    <citation type="journal article" date="2000" name="Nature">
        <title>Sequence and analysis of chromosome 1 of the plant Arabidopsis thaliana.</title>
        <authorList>
            <person name="Theologis A."/>
            <person name="Ecker J.R."/>
            <person name="Palm C.J."/>
            <person name="Federspiel N.A."/>
            <person name="Kaul S."/>
            <person name="White O."/>
            <person name="Alonso J."/>
            <person name="Altafi H."/>
            <person name="Araujo R."/>
            <person name="Bowman C.L."/>
            <person name="Brooks S.Y."/>
            <person name="Buehler E."/>
            <person name="Chan A."/>
            <person name="Chao Q."/>
            <person name="Chen H."/>
            <person name="Cheuk R.F."/>
            <person name="Chin C.W."/>
            <person name="Chung M.K."/>
            <person name="Conn L."/>
            <person name="Conway A.B."/>
            <person name="Conway A.R."/>
            <person name="Creasy T.H."/>
            <person name="Dewar K."/>
            <person name="Dunn P."/>
            <person name="Etgu P."/>
            <person name="Feldblyum T.V."/>
            <person name="Feng J.-D."/>
            <person name="Fong B."/>
            <person name="Fujii C.Y."/>
            <person name="Gill J.E."/>
            <person name="Goldsmith A.D."/>
            <person name="Haas B."/>
            <person name="Hansen N.F."/>
            <person name="Hughes B."/>
            <person name="Huizar L."/>
            <person name="Hunter J.L."/>
            <person name="Jenkins J."/>
            <person name="Johnson-Hopson C."/>
            <person name="Khan S."/>
            <person name="Khaykin E."/>
            <person name="Kim C.J."/>
            <person name="Koo H.L."/>
            <person name="Kremenetskaia I."/>
            <person name="Kurtz D.B."/>
            <person name="Kwan A."/>
            <person name="Lam B."/>
            <person name="Langin-Hooper S."/>
            <person name="Lee A."/>
            <person name="Lee J.M."/>
            <person name="Lenz C.A."/>
            <person name="Li J.H."/>
            <person name="Li Y.-P."/>
            <person name="Lin X."/>
            <person name="Liu S.X."/>
            <person name="Liu Z.A."/>
            <person name="Luros J.S."/>
            <person name="Maiti R."/>
            <person name="Marziali A."/>
            <person name="Militscher J."/>
            <person name="Miranda M."/>
            <person name="Nguyen M."/>
            <person name="Nierman W.C."/>
            <person name="Osborne B.I."/>
            <person name="Pai G."/>
            <person name="Peterson J."/>
            <person name="Pham P.K."/>
            <person name="Rizzo M."/>
            <person name="Rooney T."/>
            <person name="Rowley D."/>
            <person name="Sakano H."/>
            <person name="Salzberg S.L."/>
            <person name="Schwartz J.R."/>
            <person name="Shinn P."/>
            <person name="Southwick A.M."/>
            <person name="Sun H."/>
            <person name="Tallon L.J."/>
            <person name="Tambunga G."/>
            <person name="Toriumi M.J."/>
            <person name="Town C.D."/>
            <person name="Utterback T."/>
            <person name="Van Aken S."/>
            <person name="Vaysberg M."/>
            <person name="Vysotskaia V.S."/>
            <person name="Walker M."/>
            <person name="Wu D."/>
            <person name="Yu G."/>
            <person name="Fraser C.M."/>
            <person name="Venter J.C."/>
            <person name="Davis R.W."/>
        </authorList>
    </citation>
    <scope>NUCLEOTIDE SEQUENCE [LARGE SCALE GENOMIC DNA]</scope>
    <source>
        <strain>cv. Columbia</strain>
    </source>
</reference>
<reference key="2">
    <citation type="journal article" date="2017" name="Plant J.">
        <title>Araport11: a complete reannotation of the Arabidopsis thaliana reference genome.</title>
        <authorList>
            <person name="Cheng C.Y."/>
            <person name="Krishnakumar V."/>
            <person name="Chan A.P."/>
            <person name="Thibaud-Nissen F."/>
            <person name="Schobel S."/>
            <person name="Town C.D."/>
        </authorList>
    </citation>
    <scope>GENOME REANNOTATION</scope>
    <source>
        <strain>cv. Columbia</strain>
    </source>
</reference>
<reference key="3">
    <citation type="journal article" date="2003" name="Science">
        <title>Empirical analysis of transcriptional activity in the Arabidopsis genome.</title>
        <authorList>
            <person name="Yamada K."/>
            <person name="Lim J."/>
            <person name="Dale J.M."/>
            <person name="Chen H."/>
            <person name="Shinn P."/>
            <person name="Palm C.J."/>
            <person name="Southwick A.M."/>
            <person name="Wu H.C."/>
            <person name="Kim C.J."/>
            <person name="Nguyen M."/>
            <person name="Pham P.K."/>
            <person name="Cheuk R.F."/>
            <person name="Karlin-Newmann G."/>
            <person name="Liu S.X."/>
            <person name="Lam B."/>
            <person name="Sakano H."/>
            <person name="Wu T."/>
            <person name="Yu G."/>
            <person name="Miranda M."/>
            <person name="Quach H.L."/>
            <person name="Tripp M."/>
            <person name="Chang C.H."/>
            <person name="Lee J.M."/>
            <person name="Toriumi M.J."/>
            <person name="Chan M.M."/>
            <person name="Tang C.C."/>
            <person name="Onodera C.S."/>
            <person name="Deng J.M."/>
            <person name="Akiyama K."/>
            <person name="Ansari Y."/>
            <person name="Arakawa T."/>
            <person name="Banh J."/>
            <person name="Banno F."/>
            <person name="Bowser L."/>
            <person name="Brooks S.Y."/>
            <person name="Carninci P."/>
            <person name="Chao Q."/>
            <person name="Choy N."/>
            <person name="Enju A."/>
            <person name="Goldsmith A.D."/>
            <person name="Gurjal M."/>
            <person name="Hansen N.F."/>
            <person name="Hayashizaki Y."/>
            <person name="Johnson-Hopson C."/>
            <person name="Hsuan V.W."/>
            <person name="Iida K."/>
            <person name="Karnes M."/>
            <person name="Khan S."/>
            <person name="Koesema E."/>
            <person name="Ishida J."/>
            <person name="Jiang P.X."/>
            <person name="Jones T."/>
            <person name="Kawai J."/>
            <person name="Kamiya A."/>
            <person name="Meyers C."/>
            <person name="Nakajima M."/>
            <person name="Narusaka M."/>
            <person name="Seki M."/>
            <person name="Sakurai T."/>
            <person name="Satou M."/>
            <person name="Tamse R."/>
            <person name="Vaysberg M."/>
            <person name="Wallender E.K."/>
            <person name="Wong C."/>
            <person name="Yamamura Y."/>
            <person name="Yuan S."/>
            <person name="Shinozaki K."/>
            <person name="Davis R.W."/>
            <person name="Theologis A."/>
            <person name="Ecker J.R."/>
        </authorList>
    </citation>
    <scope>NUCLEOTIDE SEQUENCE [LARGE SCALE MRNA] (ISOFORM 1)</scope>
    <source>
        <strain>cv. Columbia</strain>
    </source>
</reference>
<reference key="4">
    <citation type="journal article" date="2001" name="Cell Stress Chaperones">
        <title>Arabidopsis thaliana type I and II chaperonins.</title>
        <authorList>
            <person name="Hill J.E."/>
            <person name="Hemmingsen S.M."/>
        </authorList>
    </citation>
    <scope>GENE FAMILY</scope>
    <scope>NOMENCLATURE</scope>
    <scope>SUBUNIT</scope>
</reference>
<feature type="chain" id="PRO_0000128350" description="T-complex protein 1 subunit epsilon">
    <location>
        <begin position="1"/>
        <end position="535"/>
    </location>
</feature>
<feature type="splice variant" id="VSP_057339" description="In isoform 2.">
    <location>
        <begin position="1"/>
        <end position="76"/>
    </location>
</feature>
<name>TCPE_ARATH</name>
<evidence type="ECO:0000303" key="1">
    <source>
    </source>
</evidence>
<evidence type="ECO:0000305" key="2"/>
<evidence type="ECO:0000305" key="3">
    <source>
    </source>
</evidence>
<evidence type="ECO:0000312" key="4">
    <source>
        <dbReference type="Araport" id="AT1G24510"/>
    </source>
</evidence>
<protein>
    <recommendedName>
        <fullName evidence="1">T-complex protein 1 subunit epsilon</fullName>
        <shortName evidence="1">TCP-1-epsilon</shortName>
    </recommendedName>
    <alternativeName>
        <fullName evidence="1">CCT-epsilon</fullName>
    </alternativeName>
    <alternativeName>
        <fullName evidence="2">Chaperonin CCT5</fullName>
    </alternativeName>
</protein>
<sequence>MALAFDEFGRPFIILREQDQKTRLRGIDAQKANIAAGKAVARILRSSLGPKGMDKMLQGPDGDITITNDGATILEQMDVDNQIAKLMVELSRSQDYEIGDGTTGVVVMAGALLEQAERQLDRGIHPIRIAEGYEMASRVAVEHLERIAQKFEFDVNNYEPLVQTCMTTLSSKIVNRCKRSLAEIAVKAVLAVADLERRDVNLDLIKVEGKVGGKLEDTELIYGILIDKDMSHPQMPKQIEDAHIAILTCPFEPPKPKTKHKVDIDTVEKFETLRKQEQQYFDEMVQKCKDVGATLVICQWGFDDEANHLLMHRNLPAVRWVGGVELELIAIATGGRIVPRFQELTPEKLGKAGVVREKSFGTTKERMLYIEHCANSKAVTVFIRGGNKMMIEETKRSIHDALCVARNLIRNKSIVYGGGAAEIACSLAVDAAADKYPGVEQYAIRAFAEALDSVPMALAENSGLQPIETLSAVKSQQIKENIPFYGIDCNDVGTNDMREQNVFETLIGKQQQILLATQVVKMILKIDDVISNSEY</sequence>
<keyword id="KW-0025">Alternative splicing</keyword>
<keyword id="KW-0067">ATP-binding</keyword>
<keyword id="KW-0143">Chaperone</keyword>
<keyword id="KW-0963">Cytoplasm</keyword>
<keyword id="KW-0547">Nucleotide-binding</keyword>
<keyword id="KW-1185">Reference proteome</keyword>
<comment type="function">
    <text evidence="2">Molecular chaperone; assists the folding of proteins upon ATP hydrolysis. Known to play a role, in vitro, in the folding of actin and tubulin.</text>
</comment>
<comment type="subunit">
    <text evidence="3">Heterooligomeric complex of about 850 to 900 kDa that forms two stacked rings, 12 to 16 nm in diameter.</text>
</comment>
<comment type="subcellular location">
    <subcellularLocation>
        <location evidence="2">Cytoplasm</location>
    </subcellularLocation>
</comment>
<comment type="alternative products">
    <event type="alternative splicing"/>
    <isoform>
        <id>O04450-1</id>
        <name>1</name>
        <sequence type="displayed"/>
    </isoform>
    <isoform>
        <id>O04450-2</id>
        <name>2</name>
        <sequence type="described" ref="VSP_057339"/>
    </isoform>
</comment>
<comment type="similarity">
    <text evidence="2">Belongs to the TCP-1 chaperonin family.</text>
</comment>
<dbReference type="EMBL" id="AC000103">
    <property type="protein sequence ID" value="AAF97977.1"/>
    <property type="molecule type" value="Genomic_DNA"/>
</dbReference>
<dbReference type="EMBL" id="CP002684">
    <property type="protein sequence ID" value="AEE30541.1"/>
    <property type="molecule type" value="Genomic_DNA"/>
</dbReference>
<dbReference type="EMBL" id="CP002684">
    <property type="protein sequence ID" value="AEE30542.1"/>
    <property type="molecule type" value="Genomic_DNA"/>
</dbReference>
<dbReference type="EMBL" id="AY075611">
    <property type="protein sequence ID" value="AAL91625.1"/>
    <property type="molecule type" value="mRNA"/>
</dbReference>
<dbReference type="EMBL" id="BT000818">
    <property type="protein sequence ID" value="AAN33193.1"/>
    <property type="molecule type" value="mRNA"/>
</dbReference>
<dbReference type="RefSeq" id="NP_173859.1">
    <molecule id="O04450-1"/>
    <property type="nucleotide sequence ID" value="NM_102295.6"/>
</dbReference>
<dbReference type="RefSeq" id="NP_973907.1">
    <molecule id="O04450-2"/>
    <property type="nucleotide sequence ID" value="NM_202178.3"/>
</dbReference>
<dbReference type="SMR" id="O04450"/>
<dbReference type="BioGRID" id="24304">
    <property type="interactions" value="66"/>
</dbReference>
<dbReference type="FunCoup" id="O04450">
    <property type="interactions" value="4952"/>
</dbReference>
<dbReference type="IntAct" id="O04450">
    <property type="interactions" value="6"/>
</dbReference>
<dbReference type="STRING" id="3702.O04450"/>
<dbReference type="iPTMnet" id="O04450"/>
<dbReference type="PaxDb" id="3702-AT1G24510.1"/>
<dbReference type="ProteomicsDB" id="234224">
    <molecule id="O04450-1"/>
</dbReference>
<dbReference type="EnsemblPlants" id="AT1G24510.1">
    <molecule id="O04450-1"/>
    <property type="protein sequence ID" value="AT1G24510.1"/>
    <property type="gene ID" value="AT1G24510"/>
</dbReference>
<dbReference type="EnsemblPlants" id="AT1G24510.2">
    <molecule id="O04450-2"/>
    <property type="protein sequence ID" value="AT1G24510.2"/>
    <property type="gene ID" value="AT1G24510"/>
</dbReference>
<dbReference type="GeneID" id="839066"/>
<dbReference type="Gramene" id="AT1G24510.1">
    <molecule id="O04450-1"/>
    <property type="protein sequence ID" value="AT1G24510.1"/>
    <property type="gene ID" value="AT1G24510"/>
</dbReference>
<dbReference type="Gramene" id="AT1G24510.2">
    <molecule id="O04450-2"/>
    <property type="protein sequence ID" value="AT1G24510.2"/>
    <property type="gene ID" value="AT1G24510"/>
</dbReference>
<dbReference type="KEGG" id="ath:AT1G24510"/>
<dbReference type="Araport" id="AT1G24510"/>
<dbReference type="TAIR" id="AT1G24510"/>
<dbReference type="eggNOG" id="KOG0357">
    <property type="taxonomic scope" value="Eukaryota"/>
</dbReference>
<dbReference type="InParanoid" id="O04450"/>
<dbReference type="OMA" id="SHPQMPH"/>
<dbReference type="OrthoDB" id="1037073at2759"/>
<dbReference type="PhylomeDB" id="O04450"/>
<dbReference type="BRENDA" id="3.6.4.B10">
    <property type="organism ID" value="399"/>
</dbReference>
<dbReference type="PRO" id="PR:O04450"/>
<dbReference type="Proteomes" id="UP000006548">
    <property type="component" value="Chromosome 1"/>
</dbReference>
<dbReference type="ExpressionAtlas" id="O04450">
    <property type="expression patterns" value="baseline and differential"/>
</dbReference>
<dbReference type="GO" id="GO:0005832">
    <property type="term" value="C:chaperonin-containing T-complex"/>
    <property type="evidence" value="ECO:0007669"/>
    <property type="project" value="UniProtKB-ARBA"/>
</dbReference>
<dbReference type="GO" id="GO:0005634">
    <property type="term" value="C:nucleus"/>
    <property type="evidence" value="ECO:0007005"/>
    <property type="project" value="TAIR"/>
</dbReference>
<dbReference type="GO" id="GO:0009506">
    <property type="term" value="C:plasmodesma"/>
    <property type="evidence" value="ECO:0007005"/>
    <property type="project" value="TAIR"/>
</dbReference>
<dbReference type="GO" id="GO:0005524">
    <property type="term" value="F:ATP binding"/>
    <property type="evidence" value="ECO:0007669"/>
    <property type="project" value="UniProtKB-KW"/>
</dbReference>
<dbReference type="GO" id="GO:0016887">
    <property type="term" value="F:ATP hydrolysis activity"/>
    <property type="evidence" value="ECO:0007669"/>
    <property type="project" value="InterPro"/>
</dbReference>
<dbReference type="GO" id="GO:0140662">
    <property type="term" value="F:ATP-dependent protein folding chaperone"/>
    <property type="evidence" value="ECO:0007669"/>
    <property type="project" value="InterPro"/>
</dbReference>
<dbReference type="GO" id="GO:0051082">
    <property type="term" value="F:unfolded protein binding"/>
    <property type="evidence" value="ECO:0007669"/>
    <property type="project" value="InterPro"/>
</dbReference>
<dbReference type="CDD" id="cd03339">
    <property type="entry name" value="TCP1_epsilon"/>
    <property type="match status" value="1"/>
</dbReference>
<dbReference type="FunFam" id="1.10.560.10:FF:000053">
    <property type="entry name" value="T-complex protein 1 subunit delta"/>
    <property type="match status" value="1"/>
</dbReference>
<dbReference type="FunFam" id="3.50.7.10:FF:000003">
    <property type="entry name" value="T-complex protein 1 subunit epsilon"/>
    <property type="match status" value="1"/>
</dbReference>
<dbReference type="FunFam" id="1.10.560.10:FF:000049">
    <property type="entry name" value="T-complex protein 1 subunitTheta, putative"/>
    <property type="match status" value="1"/>
</dbReference>
<dbReference type="Gene3D" id="3.50.7.10">
    <property type="entry name" value="GroEL"/>
    <property type="match status" value="1"/>
</dbReference>
<dbReference type="Gene3D" id="1.10.560.10">
    <property type="entry name" value="GroEL-like equatorial domain"/>
    <property type="match status" value="1"/>
</dbReference>
<dbReference type="Gene3D" id="3.30.260.10">
    <property type="entry name" value="TCP-1-like chaperonin intermediate domain"/>
    <property type="match status" value="1"/>
</dbReference>
<dbReference type="InterPro" id="IPR012718">
    <property type="entry name" value="Chap_CCT_epsi"/>
</dbReference>
<dbReference type="InterPro" id="IPR017998">
    <property type="entry name" value="Chaperone_TCP-1"/>
</dbReference>
<dbReference type="InterPro" id="IPR002194">
    <property type="entry name" value="Chaperonin_TCP-1_CS"/>
</dbReference>
<dbReference type="InterPro" id="IPR002423">
    <property type="entry name" value="Cpn60/GroEL/TCP-1"/>
</dbReference>
<dbReference type="InterPro" id="IPR027409">
    <property type="entry name" value="GroEL-like_apical_dom_sf"/>
</dbReference>
<dbReference type="InterPro" id="IPR027413">
    <property type="entry name" value="GROEL-like_equatorial_sf"/>
</dbReference>
<dbReference type="InterPro" id="IPR027410">
    <property type="entry name" value="TCP-1-like_intermed_sf"/>
</dbReference>
<dbReference type="InterPro" id="IPR053374">
    <property type="entry name" value="TCP-1_chaperonin"/>
</dbReference>
<dbReference type="InterPro" id="IPR054827">
    <property type="entry name" value="thermosome_alpha"/>
</dbReference>
<dbReference type="NCBIfam" id="TIGR02343">
    <property type="entry name" value="chap_CCT_epsi"/>
    <property type="match status" value="1"/>
</dbReference>
<dbReference type="NCBIfam" id="NF041082">
    <property type="entry name" value="thermosome_alpha"/>
    <property type="match status" value="1"/>
</dbReference>
<dbReference type="NCBIfam" id="NF041083">
    <property type="entry name" value="thermosome_beta"/>
    <property type="match status" value="1"/>
</dbReference>
<dbReference type="PANTHER" id="PTHR11353">
    <property type="entry name" value="CHAPERONIN"/>
    <property type="match status" value="1"/>
</dbReference>
<dbReference type="Pfam" id="PF00118">
    <property type="entry name" value="Cpn60_TCP1"/>
    <property type="match status" value="1"/>
</dbReference>
<dbReference type="PRINTS" id="PR00304">
    <property type="entry name" value="TCOMPLEXTCP1"/>
</dbReference>
<dbReference type="SUPFAM" id="SSF52029">
    <property type="entry name" value="GroEL apical domain-like"/>
    <property type="match status" value="1"/>
</dbReference>
<dbReference type="SUPFAM" id="SSF48592">
    <property type="entry name" value="GroEL equatorial domain-like"/>
    <property type="match status" value="1"/>
</dbReference>
<dbReference type="SUPFAM" id="SSF54849">
    <property type="entry name" value="GroEL-intermediate domain like"/>
    <property type="match status" value="1"/>
</dbReference>
<dbReference type="PROSITE" id="PS00750">
    <property type="entry name" value="TCP1_1"/>
    <property type="match status" value="1"/>
</dbReference>
<dbReference type="PROSITE" id="PS00751">
    <property type="entry name" value="TCP1_2"/>
    <property type="match status" value="1"/>
</dbReference>
<dbReference type="PROSITE" id="PS00995">
    <property type="entry name" value="TCP1_3"/>
    <property type="match status" value="1"/>
</dbReference>